<feature type="chain" id="PRO_0000203921" description="Tagatose-6-phosphate kinase">
    <location>
        <begin position="1"/>
        <end position="310"/>
    </location>
</feature>
<dbReference type="EC" id="2.7.1.144" evidence="1"/>
<dbReference type="EMBL" id="BA000033">
    <property type="protein sequence ID" value="BAB95984.1"/>
    <property type="molecule type" value="Genomic_DNA"/>
</dbReference>
<dbReference type="RefSeq" id="WP_000604135.1">
    <property type="nucleotide sequence ID" value="NC_003923.1"/>
</dbReference>
<dbReference type="SMR" id="P0A0B8"/>
<dbReference type="KEGG" id="sam:MW2119"/>
<dbReference type="HOGENOM" id="CLU_050013_5_0_9"/>
<dbReference type="BioCyc" id="MetaCyc:MONOMER-2745"/>
<dbReference type="UniPathway" id="UPA00704">
    <property type="reaction ID" value="UER00715"/>
</dbReference>
<dbReference type="GO" id="GO:0005829">
    <property type="term" value="C:cytosol"/>
    <property type="evidence" value="ECO:0007669"/>
    <property type="project" value="TreeGrafter"/>
</dbReference>
<dbReference type="GO" id="GO:0005524">
    <property type="term" value="F:ATP binding"/>
    <property type="evidence" value="ECO:0007669"/>
    <property type="project" value="UniProtKB-KW"/>
</dbReference>
<dbReference type="GO" id="GO:0008443">
    <property type="term" value="F:phosphofructokinase activity"/>
    <property type="evidence" value="ECO:0007669"/>
    <property type="project" value="TreeGrafter"/>
</dbReference>
<dbReference type="GO" id="GO:0009024">
    <property type="term" value="F:tagatose-6-phosphate kinase activity"/>
    <property type="evidence" value="ECO:0007669"/>
    <property type="project" value="UniProtKB-UniRule"/>
</dbReference>
<dbReference type="GO" id="GO:2001059">
    <property type="term" value="P:D-tagatose 6-phosphate catabolic process"/>
    <property type="evidence" value="ECO:0007669"/>
    <property type="project" value="UniProtKB-UniRule"/>
</dbReference>
<dbReference type="GO" id="GO:0019512">
    <property type="term" value="P:lactose catabolic process via tagatose-6-phosphate"/>
    <property type="evidence" value="ECO:0007669"/>
    <property type="project" value="InterPro"/>
</dbReference>
<dbReference type="CDD" id="cd01164">
    <property type="entry name" value="FruK_PfkB_like"/>
    <property type="match status" value="1"/>
</dbReference>
<dbReference type="FunFam" id="3.40.1190.20:FF:000001">
    <property type="entry name" value="Phosphofructokinase"/>
    <property type="match status" value="1"/>
</dbReference>
<dbReference type="Gene3D" id="3.40.1190.20">
    <property type="match status" value="1"/>
</dbReference>
<dbReference type="HAMAP" id="MF_01557">
    <property type="entry name" value="LacC"/>
    <property type="match status" value="1"/>
</dbReference>
<dbReference type="InterPro" id="IPR002173">
    <property type="entry name" value="Carboh/pur_kinase_PfkB_CS"/>
</dbReference>
<dbReference type="InterPro" id="IPR005926">
    <property type="entry name" value="LacC"/>
</dbReference>
<dbReference type="InterPro" id="IPR011611">
    <property type="entry name" value="PfkB_dom"/>
</dbReference>
<dbReference type="InterPro" id="IPR029056">
    <property type="entry name" value="Ribokinase-like"/>
</dbReference>
<dbReference type="InterPro" id="IPR017583">
    <property type="entry name" value="Tagatose/fructose_Pkinase"/>
</dbReference>
<dbReference type="NCBIfam" id="TIGR03168">
    <property type="entry name" value="1-PFK"/>
    <property type="match status" value="1"/>
</dbReference>
<dbReference type="NCBIfam" id="TIGR01231">
    <property type="entry name" value="lacC"/>
    <property type="match status" value="1"/>
</dbReference>
<dbReference type="NCBIfam" id="NF010033">
    <property type="entry name" value="PRK13508.1"/>
    <property type="match status" value="1"/>
</dbReference>
<dbReference type="PANTHER" id="PTHR46566:SF5">
    <property type="entry name" value="1-PHOSPHOFRUCTOKINASE"/>
    <property type="match status" value="1"/>
</dbReference>
<dbReference type="PANTHER" id="PTHR46566">
    <property type="entry name" value="1-PHOSPHOFRUCTOKINASE-RELATED"/>
    <property type="match status" value="1"/>
</dbReference>
<dbReference type="Pfam" id="PF00294">
    <property type="entry name" value="PfkB"/>
    <property type="match status" value="1"/>
</dbReference>
<dbReference type="PIRSF" id="PIRSF000535">
    <property type="entry name" value="1PFK/6PFK/LacC"/>
    <property type="match status" value="1"/>
</dbReference>
<dbReference type="SUPFAM" id="SSF53613">
    <property type="entry name" value="Ribokinase-like"/>
    <property type="match status" value="1"/>
</dbReference>
<dbReference type="PROSITE" id="PS00583">
    <property type="entry name" value="PFKB_KINASES_1"/>
    <property type="match status" value="1"/>
</dbReference>
<dbReference type="PROSITE" id="PS00584">
    <property type="entry name" value="PFKB_KINASES_2"/>
    <property type="match status" value="1"/>
</dbReference>
<accession>P0A0B8</accession>
<accession>P11099</accession>
<sequence>MILTLTLNPSVDISYPLTALKLDDVNRVQEVSKTAGGKGLNVTRVLAQVGEPVLASGFIGGELGQFIAKKLDHADIKHAFYNIKGETRNCIAILHEGQQTEILEQGPEIDNQEAAGFIKHFEQLLEKVEAVAISGSLPKGLNQDYYAQIIERCQNKGVPVILDCSGATLQTVLENPYKPTVIKPNISELYQLLNQPLDESLESLKQAVSQPLFEGIEWIIVSLGAQGAFAKHNHTFYRVNIPTISVLNPVGSGDSTVAGITSAILNHENDHDLLKKANTLGMLNAQEAQTGYVNLNNYDDLFNQIEVLEV</sequence>
<name>LACC_STAAW</name>
<gene>
    <name evidence="1" type="primary">lacC</name>
    <name type="ordered locus">MW2119</name>
</gene>
<proteinExistence type="inferred from homology"/>
<evidence type="ECO:0000255" key="1">
    <source>
        <dbReference type="HAMAP-Rule" id="MF_01557"/>
    </source>
</evidence>
<protein>
    <recommendedName>
        <fullName evidence="1">Tagatose-6-phosphate kinase</fullName>
        <ecNumber evidence="1">2.7.1.144</ecNumber>
    </recommendedName>
    <alternativeName>
        <fullName evidence="1">Phosphotagatokinase</fullName>
    </alternativeName>
</protein>
<organism>
    <name type="scientific">Staphylococcus aureus (strain MW2)</name>
    <dbReference type="NCBI Taxonomy" id="196620"/>
    <lineage>
        <taxon>Bacteria</taxon>
        <taxon>Bacillati</taxon>
        <taxon>Bacillota</taxon>
        <taxon>Bacilli</taxon>
        <taxon>Bacillales</taxon>
        <taxon>Staphylococcaceae</taxon>
        <taxon>Staphylococcus</taxon>
    </lineage>
</organism>
<comment type="catalytic activity">
    <reaction evidence="1">
        <text>D-tagatofuranose 6-phosphate + ATP = D-tagatofuranose 1,6-bisphosphate + ADP + H(+)</text>
        <dbReference type="Rhea" id="RHEA:12420"/>
        <dbReference type="ChEBI" id="CHEBI:15378"/>
        <dbReference type="ChEBI" id="CHEBI:30616"/>
        <dbReference type="ChEBI" id="CHEBI:58694"/>
        <dbReference type="ChEBI" id="CHEBI:58695"/>
        <dbReference type="ChEBI" id="CHEBI:456216"/>
        <dbReference type="EC" id="2.7.1.144"/>
    </reaction>
</comment>
<comment type="pathway">
    <text evidence="1">Carbohydrate metabolism; D-tagatose 6-phosphate degradation; D-glyceraldehyde 3-phosphate and glycerone phosphate from D-tagatose 6-phosphate: step 1/2.</text>
</comment>
<comment type="similarity">
    <text evidence="1">Belongs to the carbohydrate kinase PfkB family. LacC subfamily.</text>
</comment>
<keyword id="KW-0067">ATP-binding</keyword>
<keyword id="KW-0418">Kinase</keyword>
<keyword id="KW-0423">Lactose metabolism</keyword>
<keyword id="KW-0547">Nucleotide-binding</keyword>
<keyword id="KW-0808">Transferase</keyword>
<reference key="1">
    <citation type="journal article" date="2002" name="Lancet">
        <title>Genome and virulence determinants of high virulence community-acquired MRSA.</title>
        <authorList>
            <person name="Baba T."/>
            <person name="Takeuchi F."/>
            <person name="Kuroda M."/>
            <person name="Yuzawa H."/>
            <person name="Aoki K."/>
            <person name="Oguchi A."/>
            <person name="Nagai Y."/>
            <person name="Iwama N."/>
            <person name="Asano K."/>
            <person name="Naimi T."/>
            <person name="Kuroda H."/>
            <person name="Cui L."/>
            <person name="Yamamoto K."/>
            <person name="Hiramatsu K."/>
        </authorList>
    </citation>
    <scope>NUCLEOTIDE SEQUENCE [LARGE SCALE GENOMIC DNA]</scope>
    <source>
        <strain>MW2</strain>
    </source>
</reference>